<protein>
    <recommendedName>
        <fullName evidence="1">Queuine tRNA-ribosyltransferase</fullName>
        <ecNumber evidence="1">2.4.2.29</ecNumber>
    </recommendedName>
    <alternativeName>
        <fullName evidence="1">Guanine insertion enzyme</fullName>
    </alternativeName>
    <alternativeName>
        <fullName evidence="1">tRNA-guanine transglycosylase</fullName>
    </alternativeName>
</protein>
<gene>
    <name evidence="1" type="primary">tgt</name>
    <name type="ordered locus">Bsph_3933</name>
</gene>
<dbReference type="EC" id="2.4.2.29" evidence="1"/>
<dbReference type="EMBL" id="CP000817">
    <property type="protein sequence ID" value="ACA41403.1"/>
    <property type="molecule type" value="Genomic_DNA"/>
</dbReference>
<dbReference type="RefSeq" id="WP_012295448.1">
    <property type="nucleotide sequence ID" value="NC_010382.1"/>
</dbReference>
<dbReference type="SMR" id="B1HVA1"/>
<dbReference type="EnsemblBacteria" id="ACA41403">
    <property type="protein sequence ID" value="ACA41403"/>
    <property type="gene ID" value="Bsph_3933"/>
</dbReference>
<dbReference type="KEGG" id="lsp:Bsph_3933"/>
<dbReference type="HOGENOM" id="CLU_022060_0_1_9"/>
<dbReference type="UniPathway" id="UPA00392"/>
<dbReference type="Proteomes" id="UP000002164">
    <property type="component" value="Chromosome"/>
</dbReference>
<dbReference type="GO" id="GO:0005829">
    <property type="term" value="C:cytosol"/>
    <property type="evidence" value="ECO:0007669"/>
    <property type="project" value="TreeGrafter"/>
</dbReference>
<dbReference type="GO" id="GO:0046872">
    <property type="term" value="F:metal ion binding"/>
    <property type="evidence" value="ECO:0007669"/>
    <property type="project" value="UniProtKB-KW"/>
</dbReference>
<dbReference type="GO" id="GO:0008479">
    <property type="term" value="F:tRNA-guanosine(34) queuine transglycosylase activity"/>
    <property type="evidence" value="ECO:0007669"/>
    <property type="project" value="UniProtKB-UniRule"/>
</dbReference>
<dbReference type="GO" id="GO:0008616">
    <property type="term" value="P:queuosine biosynthetic process"/>
    <property type="evidence" value="ECO:0007669"/>
    <property type="project" value="UniProtKB-UniRule"/>
</dbReference>
<dbReference type="GO" id="GO:0002099">
    <property type="term" value="P:tRNA wobble guanine modification"/>
    <property type="evidence" value="ECO:0007669"/>
    <property type="project" value="TreeGrafter"/>
</dbReference>
<dbReference type="GO" id="GO:0101030">
    <property type="term" value="P:tRNA-guanine transglycosylation"/>
    <property type="evidence" value="ECO:0007669"/>
    <property type="project" value="InterPro"/>
</dbReference>
<dbReference type="FunFam" id="3.20.20.105:FF:000001">
    <property type="entry name" value="Queuine tRNA-ribosyltransferase"/>
    <property type="match status" value="1"/>
</dbReference>
<dbReference type="Gene3D" id="3.20.20.105">
    <property type="entry name" value="Queuine tRNA-ribosyltransferase-like"/>
    <property type="match status" value="1"/>
</dbReference>
<dbReference type="HAMAP" id="MF_00168">
    <property type="entry name" value="Q_tRNA_Tgt"/>
    <property type="match status" value="1"/>
</dbReference>
<dbReference type="InterPro" id="IPR050076">
    <property type="entry name" value="ArchSynthase1/Queuine_TRR"/>
</dbReference>
<dbReference type="InterPro" id="IPR004803">
    <property type="entry name" value="TGT"/>
</dbReference>
<dbReference type="InterPro" id="IPR036511">
    <property type="entry name" value="TGT-like_sf"/>
</dbReference>
<dbReference type="InterPro" id="IPR002616">
    <property type="entry name" value="tRNA_ribo_trans-like"/>
</dbReference>
<dbReference type="NCBIfam" id="TIGR00430">
    <property type="entry name" value="Q_tRNA_tgt"/>
    <property type="match status" value="1"/>
</dbReference>
<dbReference type="NCBIfam" id="TIGR00449">
    <property type="entry name" value="tgt_general"/>
    <property type="match status" value="1"/>
</dbReference>
<dbReference type="PANTHER" id="PTHR46499">
    <property type="entry name" value="QUEUINE TRNA-RIBOSYLTRANSFERASE"/>
    <property type="match status" value="1"/>
</dbReference>
<dbReference type="PANTHER" id="PTHR46499:SF1">
    <property type="entry name" value="QUEUINE TRNA-RIBOSYLTRANSFERASE"/>
    <property type="match status" value="1"/>
</dbReference>
<dbReference type="Pfam" id="PF01702">
    <property type="entry name" value="TGT"/>
    <property type="match status" value="1"/>
</dbReference>
<dbReference type="SUPFAM" id="SSF51713">
    <property type="entry name" value="tRNA-guanine transglycosylase"/>
    <property type="match status" value="1"/>
</dbReference>
<evidence type="ECO:0000255" key="1">
    <source>
        <dbReference type="HAMAP-Rule" id="MF_00168"/>
    </source>
</evidence>
<keyword id="KW-0328">Glycosyltransferase</keyword>
<keyword id="KW-0479">Metal-binding</keyword>
<keyword id="KW-0671">Queuosine biosynthesis</keyword>
<keyword id="KW-0808">Transferase</keyword>
<keyword id="KW-0819">tRNA processing</keyword>
<keyword id="KW-0862">Zinc</keyword>
<feature type="chain" id="PRO_1000198015" description="Queuine tRNA-ribosyltransferase">
    <location>
        <begin position="1"/>
        <end position="381"/>
    </location>
</feature>
<feature type="region of interest" description="RNA binding" evidence="1">
    <location>
        <begin position="251"/>
        <end position="257"/>
    </location>
</feature>
<feature type="region of interest" description="RNA binding; important for wobble base 34 recognition" evidence="1">
    <location>
        <begin position="275"/>
        <end position="279"/>
    </location>
</feature>
<feature type="active site" description="Proton acceptor" evidence="1">
    <location>
        <position position="96"/>
    </location>
</feature>
<feature type="active site" description="Nucleophile" evidence="1">
    <location>
        <position position="270"/>
    </location>
</feature>
<feature type="binding site" evidence="1">
    <location>
        <begin position="96"/>
        <end position="100"/>
    </location>
    <ligand>
        <name>substrate</name>
    </ligand>
</feature>
<feature type="binding site" evidence="1">
    <location>
        <position position="150"/>
    </location>
    <ligand>
        <name>substrate</name>
    </ligand>
</feature>
<feature type="binding site" evidence="1">
    <location>
        <position position="193"/>
    </location>
    <ligand>
        <name>substrate</name>
    </ligand>
</feature>
<feature type="binding site" evidence="1">
    <location>
        <position position="220"/>
    </location>
    <ligand>
        <name>substrate</name>
    </ligand>
</feature>
<feature type="binding site" evidence="1">
    <location>
        <position position="308"/>
    </location>
    <ligand>
        <name>Zn(2+)</name>
        <dbReference type="ChEBI" id="CHEBI:29105"/>
    </ligand>
</feature>
<feature type="binding site" evidence="1">
    <location>
        <position position="310"/>
    </location>
    <ligand>
        <name>Zn(2+)</name>
        <dbReference type="ChEBI" id="CHEBI:29105"/>
    </ligand>
</feature>
<feature type="binding site" evidence="1">
    <location>
        <position position="313"/>
    </location>
    <ligand>
        <name>Zn(2+)</name>
        <dbReference type="ChEBI" id="CHEBI:29105"/>
    </ligand>
</feature>
<feature type="binding site" evidence="1">
    <location>
        <position position="339"/>
    </location>
    <ligand>
        <name>Zn(2+)</name>
        <dbReference type="ChEBI" id="CHEBI:29105"/>
    </ligand>
</feature>
<reference key="1">
    <citation type="journal article" date="2008" name="J. Bacteriol.">
        <title>Complete genome sequence of the mosquitocidal bacterium Bacillus sphaericus C3-41 and comparison with those of closely related Bacillus species.</title>
        <authorList>
            <person name="Hu X."/>
            <person name="Fan W."/>
            <person name="Han B."/>
            <person name="Liu H."/>
            <person name="Zheng D."/>
            <person name="Li Q."/>
            <person name="Dong W."/>
            <person name="Yan J."/>
            <person name="Gao M."/>
            <person name="Berry C."/>
            <person name="Yuan Z."/>
        </authorList>
    </citation>
    <scope>NUCLEOTIDE SEQUENCE [LARGE SCALE GENOMIC DNA]</scope>
    <source>
        <strain>C3-41</strain>
    </source>
</reference>
<accession>B1HVA1</accession>
<name>TGT_LYSSC</name>
<proteinExistence type="inferred from homology"/>
<organism>
    <name type="scientific">Lysinibacillus sphaericus (strain C3-41)</name>
    <dbReference type="NCBI Taxonomy" id="444177"/>
    <lineage>
        <taxon>Bacteria</taxon>
        <taxon>Bacillati</taxon>
        <taxon>Bacillota</taxon>
        <taxon>Bacilli</taxon>
        <taxon>Bacillales</taxon>
        <taxon>Bacillaceae</taxon>
        <taxon>Lysinibacillus</taxon>
    </lineage>
</organism>
<sequence length="381" mass="43370">MTQPAIRYELLHTCKQTGARLGIVHTPHGSFETPAFMPVGTQATVKTMSPEELKEMNAGIILSNTYHLWLRPGNDIVKEAGGLHKFMNWDRPILTDSGGFQVFSLSQFRKIEEEGVHFRNHLNGDKLFLSPEKAMEIQNDLGSDIMMAFDECPPYPATHEYMLQSVDRTTRWAKRCKEAHSRPEEQGLFGIIQGGEYEDLRRRSAEALVELDFPGYAIGGLSVGEPKDIMNRVLEFTTPLMPANKPRYLMGVGSPDSLIDGAIRGVDMFDCVLPTRIARNGTLMTSEGRLVVKNAKYARDFGPIDPNCDCYTCKNYSRAYIRHLIRTEETFGIRLTSYHNLHFLLKLMEQVREAIRQDRLGDFREEFFEKYGFNGPNAKNF</sequence>
<comment type="function">
    <text evidence="1">Catalyzes the base-exchange of a guanine (G) residue with the queuine precursor 7-aminomethyl-7-deazaguanine (PreQ1) at position 34 (anticodon wobble position) in tRNAs with GU(N) anticodons (tRNA-Asp, -Asn, -His and -Tyr). Catalysis occurs through a double-displacement mechanism. The nucleophile active site attacks the C1' of nucleotide 34 to detach the guanine base from the RNA, forming a covalent enzyme-RNA intermediate. The proton acceptor active site deprotonates the incoming PreQ1, allowing a nucleophilic attack on the C1' of the ribose to form the product. After dissociation, two additional enzymatic reactions on the tRNA convert PreQ1 to queuine (Q), resulting in the hypermodified nucleoside queuosine (7-(((4,5-cis-dihydroxy-2-cyclopenten-1-yl)amino)methyl)-7-deazaguanosine).</text>
</comment>
<comment type="catalytic activity">
    <reaction evidence="1">
        <text>7-aminomethyl-7-carbaguanine + guanosine(34) in tRNA = 7-aminomethyl-7-carbaguanosine(34) in tRNA + guanine</text>
        <dbReference type="Rhea" id="RHEA:24104"/>
        <dbReference type="Rhea" id="RHEA-COMP:10341"/>
        <dbReference type="Rhea" id="RHEA-COMP:10342"/>
        <dbReference type="ChEBI" id="CHEBI:16235"/>
        <dbReference type="ChEBI" id="CHEBI:58703"/>
        <dbReference type="ChEBI" id="CHEBI:74269"/>
        <dbReference type="ChEBI" id="CHEBI:82833"/>
        <dbReference type="EC" id="2.4.2.29"/>
    </reaction>
</comment>
<comment type="cofactor">
    <cofactor evidence="1">
        <name>Zn(2+)</name>
        <dbReference type="ChEBI" id="CHEBI:29105"/>
    </cofactor>
    <text evidence="1">Binds 1 zinc ion per subunit.</text>
</comment>
<comment type="pathway">
    <text evidence="1">tRNA modification; tRNA-queuosine biosynthesis.</text>
</comment>
<comment type="subunit">
    <text evidence="1">Homodimer. Within each dimer, one monomer is responsible for RNA recognition and catalysis, while the other monomer binds to the replacement base PreQ1.</text>
</comment>
<comment type="similarity">
    <text evidence="1">Belongs to the queuine tRNA-ribosyltransferase family.</text>
</comment>